<gene>
    <name evidence="1" type="primary">ubiG</name>
    <name type="ordered locus">BPSL2523</name>
</gene>
<keyword id="KW-0489">Methyltransferase</keyword>
<keyword id="KW-1185">Reference proteome</keyword>
<keyword id="KW-0949">S-adenosyl-L-methionine</keyword>
<keyword id="KW-0808">Transferase</keyword>
<keyword id="KW-0831">Ubiquinone biosynthesis</keyword>
<evidence type="ECO:0000255" key="1">
    <source>
        <dbReference type="HAMAP-Rule" id="MF_00472"/>
    </source>
</evidence>
<sequence>MTNADPHELQKFSDLAHKWWDPNAEFKPLHDLNPVRLSWIDAHAHLPGKRVVDIGCGGGILSESMASLGAQVKGIDLATEALGVADLHSLESGVSVDYEAIAAEALAAREPGAYDVVTCMEMLEHVPSPANIVAACATLVKPGGWVFFSTLNRNLKSYLLAVIGAEYIAQMLPKGTHDYARFIRPSELARFVREAGLQMVEIKGIAYHPLAKRFALSNDTDVNYLVACRRGA</sequence>
<protein>
    <recommendedName>
        <fullName evidence="1">Ubiquinone biosynthesis O-methyltransferase</fullName>
    </recommendedName>
    <alternativeName>
        <fullName evidence="1">2-polyprenyl-6-hydroxyphenol methylase</fullName>
        <ecNumber evidence="1">2.1.1.222</ecNumber>
    </alternativeName>
    <alternativeName>
        <fullName evidence="1">3-demethylubiquinone 3-O-methyltransferase</fullName>
        <ecNumber evidence="1">2.1.1.64</ecNumber>
    </alternativeName>
</protein>
<reference key="1">
    <citation type="journal article" date="2004" name="Proc. Natl. Acad. Sci. U.S.A.">
        <title>Genomic plasticity of the causative agent of melioidosis, Burkholderia pseudomallei.</title>
        <authorList>
            <person name="Holden M.T.G."/>
            <person name="Titball R.W."/>
            <person name="Peacock S.J."/>
            <person name="Cerdeno-Tarraga A.-M."/>
            <person name="Atkins T."/>
            <person name="Crossman L.C."/>
            <person name="Pitt T."/>
            <person name="Churcher C."/>
            <person name="Mungall K.L."/>
            <person name="Bentley S.D."/>
            <person name="Sebaihia M."/>
            <person name="Thomson N.R."/>
            <person name="Bason N."/>
            <person name="Beacham I.R."/>
            <person name="Brooks K."/>
            <person name="Brown K.A."/>
            <person name="Brown N.F."/>
            <person name="Challis G.L."/>
            <person name="Cherevach I."/>
            <person name="Chillingworth T."/>
            <person name="Cronin A."/>
            <person name="Crossett B."/>
            <person name="Davis P."/>
            <person name="DeShazer D."/>
            <person name="Feltwell T."/>
            <person name="Fraser A."/>
            <person name="Hance Z."/>
            <person name="Hauser H."/>
            <person name="Holroyd S."/>
            <person name="Jagels K."/>
            <person name="Keith K.E."/>
            <person name="Maddison M."/>
            <person name="Moule S."/>
            <person name="Price C."/>
            <person name="Quail M.A."/>
            <person name="Rabbinowitsch E."/>
            <person name="Rutherford K."/>
            <person name="Sanders M."/>
            <person name="Simmonds M."/>
            <person name="Songsivilai S."/>
            <person name="Stevens K."/>
            <person name="Tumapa S."/>
            <person name="Vesaratchavest M."/>
            <person name="Whitehead S."/>
            <person name="Yeats C."/>
            <person name="Barrell B.G."/>
            <person name="Oyston P.C.F."/>
            <person name="Parkhill J."/>
        </authorList>
    </citation>
    <scope>NUCLEOTIDE SEQUENCE [LARGE SCALE GENOMIC DNA]</scope>
    <source>
        <strain>K96243</strain>
    </source>
</reference>
<comment type="function">
    <text evidence="1">O-methyltransferase that catalyzes the 2 O-methylation steps in the ubiquinone biosynthetic pathway.</text>
</comment>
<comment type="catalytic activity">
    <reaction evidence="1">
        <text>a 3-demethylubiquinol + S-adenosyl-L-methionine = a ubiquinol + S-adenosyl-L-homocysteine + H(+)</text>
        <dbReference type="Rhea" id="RHEA:44380"/>
        <dbReference type="Rhea" id="RHEA-COMP:9566"/>
        <dbReference type="Rhea" id="RHEA-COMP:10914"/>
        <dbReference type="ChEBI" id="CHEBI:15378"/>
        <dbReference type="ChEBI" id="CHEBI:17976"/>
        <dbReference type="ChEBI" id="CHEBI:57856"/>
        <dbReference type="ChEBI" id="CHEBI:59789"/>
        <dbReference type="ChEBI" id="CHEBI:84422"/>
        <dbReference type="EC" id="2.1.1.64"/>
    </reaction>
</comment>
<comment type="catalytic activity">
    <reaction evidence="1">
        <text>a 3-(all-trans-polyprenyl)benzene-1,2-diol + S-adenosyl-L-methionine = a 2-methoxy-6-(all-trans-polyprenyl)phenol + S-adenosyl-L-homocysteine + H(+)</text>
        <dbReference type="Rhea" id="RHEA:31411"/>
        <dbReference type="Rhea" id="RHEA-COMP:9550"/>
        <dbReference type="Rhea" id="RHEA-COMP:9551"/>
        <dbReference type="ChEBI" id="CHEBI:15378"/>
        <dbReference type="ChEBI" id="CHEBI:57856"/>
        <dbReference type="ChEBI" id="CHEBI:59789"/>
        <dbReference type="ChEBI" id="CHEBI:62729"/>
        <dbReference type="ChEBI" id="CHEBI:62731"/>
        <dbReference type="EC" id="2.1.1.222"/>
    </reaction>
</comment>
<comment type="pathway">
    <text evidence="1">Cofactor biosynthesis; ubiquinone biosynthesis.</text>
</comment>
<comment type="similarity">
    <text evidence="1">Belongs to the methyltransferase superfamily. UbiG/COQ3 family.</text>
</comment>
<accession>Q63RZ8</accession>
<organism>
    <name type="scientific">Burkholderia pseudomallei (strain K96243)</name>
    <dbReference type="NCBI Taxonomy" id="272560"/>
    <lineage>
        <taxon>Bacteria</taxon>
        <taxon>Pseudomonadati</taxon>
        <taxon>Pseudomonadota</taxon>
        <taxon>Betaproteobacteria</taxon>
        <taxon>Burkholderiales</taxon>
        <taxon>Burkholderiaceae</taxon>
        <taxon>Burkholderia</taxon>
        <taxon>pseudomallei group</taxon>
    </lineage>
</organism>
<dbReference type="EC" id="2.1.1.222" evidence="1"/>
<dbReference type="EC" id="2.1.1.64" evidence="1"/>
<dbReference type="EMBL" id="BX571965">
    <property type="protein sequence ID" value="CAH36530.1"/>
    <property type="molecule type" value="Genomic_DNA"/>
</dbReference>
<dbReference type="RefSeq" id="WP_004532296.1">
    <property type="nucleotide sequence ID" value="NZ_CP009538.1"/>
</dbReference>
<dbReference type="RefSeq" id="YP_109119.1">
    <property type="nucleotide sequence ID" value="NC_006350.1"/>
</dbReference>
<dbReference type="SMR" id="Q63RZ8"/>
<dbReference type="STRING" id="272560.BPSL2523"/>
<dbReference type="GeneID" id="93061109"/>
<dbReference type="KEGG" id="bps:BPSL2523"/>
<dbReference type="PATRIC" id="fig|272560.51.peg.2857"/>
<dbReference type="eggNOG" id="COG2227">
    <property type="taxonomic scope" value="Bacteria"/>
</dbReference>
<dbReference type="UniPathway" id="UPA00232"/>
<dbReference type="Proteomes" id="UP000000605">
    <property type="component" value="Chromosome 1"/>
</dbReference>
<dbReference type="GO" id="GO:0102208">
    <property type="term" value="F:2-polyprenyl-6-hydroxyphenol methylase activity"/>
    <property type="evidence" value="ECO:0007669"/>
    <property type="project" value="UniProtKB-EC"/>
</dbReference>
<dbReference type="GO" id="GO:0061542">
    <property type="term" value="F:3-demethylubiquinol 3-O-methyltransferase activity"/>
    <property type="evidence" value="ECO:0007669"/>
    <property type="project" value="UniProtKB-UniRule"/>
</dbReference>
<dbReference type="GO" id="GO:0010420">
    <property type="term" value="F:polyprenyldihydroxybenzoate methyltransferase activity"/>
    <property type="evidence" value="ECO:0007669"/>
    <property type="project" value="InterPro"/>
</dbReference>
<dbReference type="GO" id="GO:0032259">
    <property type="term" value="P:methylation"/>
    <property type="evidence" value="ECO:0007669"/>
    <property type="project" value="UniProtKB-KW"/>
</dbReference>
<dbReference type="CDD" id="cd02440">
    <property type="entry name" value="AdoMet_MTases"/>
    <property type="match status" value="1"/>
</dbReference>
<dbReference type="FunFam" id="3.40.50.150:FF:000028">
    <property type="entry name" value="Ubiquinone biosynthesis O-methyltransferase"/>
    <property type="match status" value="1"/>
</dbReference>
<dbReference type="Gene3D" id="3.40.50.150">
    <property type="entry name" value="Vaccinia Virus protein VP39"/>
    <property type="match status" value="1"/>
</dbReference>
<dbReference type="HAMAP" id="MF_00472">
    <property type="entry name" value="UbiG"/>
    <property type="match status" value="1"/>
</dbReference>
<dbReference type="InterPro" id="IPR029063">
    <property type="entry name" value="SAM-dependent_MTases_sf"/>
</dbReference>
<dbReference type="InterPro" id="IPR010233">
    <property type="entry name" value="UbiG_MeTrfase"/>
</dbReference>
<dbReference type="NCBIfam" id="TIGR01983">
    <property type="entry name" value="UbiG"/>
    <property type="match status" value="1"/>
</dbReference>
<dbReference type="PANTHER" id="PTHR43464">
    <property type="entry name" value="METHYLTRANSFERASE"/>
    <property type="match status" value="1"/>
</dbReference>
<dbReference type="PANTHER" id="PTHR43464:SF19">
    <property type="entry name" value="UBIQUINONE BIOSYNTHESIS O-METHYLTRANSFERASE, MITOCHONDRIAL"/>
    <property type="match status" value="1"/>
</dbReference>
<dbReference type="Pfam" id="PF13489">
    <property type="entry name" value="Methyltransf_23"/>
    <property type="match status" value="1"/>
</dbReference>
<dbReference type="SUPFAM" id="SSF53335">
    <property type="entry name" value="S-adenosyl-L-methionine-dependent methyltransferases"/>
    <property type="match status" value="1"/>
</dbReference>
<proteinExistence type="inferred from homology"/>
<feature type="chain" id="PRO_0000193375" description="Ubiquinone biosynthesis O-methyltransferase">
    <location>
        <begin position="1"/>
        <end position="232"/>
    </location>
</feature>
<feature type="binding site" evidence="1">
    <location>
        <position position="36"/>
    </location>
    <ligand>
        <name>S-adenosyl-L-methionine</name>
        <dbReference type="ChEBI" id="CHEBI:59789"/>
    </ligand>
</feature>
<feature type="binding site" evidence="1">
    <location>
        <position position="55"/>
    </location>
    <ligand>
        <name>S-adenosyl-L-methionine</name>
        <dbReference type="ChEBI" id="CHEBI:59789"/>
    </ligand>
</feature>
<feature type="binding site" evidence="1">
    <location>
        <position position="76"/>
    </location>
    <ligand>
        <name>S-adenosyl-L-methionine</name>
        <dbReference type="ChEBI" id="CHEBI:59789"/>
    </ligand>
</feature>
<feature type="binding site" evidence="1">
    <location>
        <position position="120"/>
    </location>
    <ligand>
        <name>S-adenosyl-L-methionine</name>
        <dbReference type="ChEBI" id="CHEBI:59789"/>
    </ligand>
</feature>
<name>UBIG_BURPS</name>